<sequence>MFHATTIVAVKKGDQVAMAGDGQVTMGQATVMKHKARKVRRLFHGKVLAGFAGSVADAFTLFEKFENKLEEYQGNLQRAAVELAKDWRMDKALRNLEALLIVADKQSMLLISGSGEVIEPDDGIAAIGSGGNYALAAARALVKNTDLQPAQLVQEAMEVASSICVYTNDQIIVEEL</sequence>
<proteinExistence type="inferred from homology"/>
<feature type="chain" id="PRO_1000125404" description="ATP-dependent protease subunit HslV">
    <location>
        <begin position="1"/>
        <end position="176"/>
    </location>
</feature>
<feature type="active site" evidence="1">
    <location>
        <position position="5"/>
    </location>
</feature>
<feature type="binding site" evidence="1">
    <location>
        <position position="161"/>
    </location>
    <ligand>
        <name>Na(+)</name>
        <dbReference type="ChEBI" id="CHEBI:29101"/>
    </ligand>
</feature>
<feature type="binding site" evidence="1">
    <location>
        <position position="164"/>
    </location>
    <ligand>
        <name>Na(+)</name>
        <dbReference type="ChEBI" id="CHEBI:29101"/>
    </ligand>
</feature>
<feature type="binding site" evidence="1">
    <location>
        <position position="167"/>
    </location>
    <ligand>
        <name>Na(+)</name>
        <dbReference type="ChEBI" id="CHEBI:29101"/>
    </ligand>
</feature>
<comment type="function">
    <text evidence="1">Protease subunit of a proteasome-like degradation complex believed to be a general protein degrading machinery.</text>
</comment>
<comment type="catalytic activity">
    <reaction evidence="1">
        <text>ATP-dependent cleavage of peptide bonds with broad specificity.</text>
        <dbReference type="EC" id="3.4.25.2"/>
    </reaction>
</comment>
<comment type="activity regulation">
    <text evidence="1">Allosterically activated by HslU binding.</text>
</comment>
<comment type="subunit">
    <text evidence="1">A double ring-shaped homohexamer of HslV is capped on each side by a ring-shaped HslU homohexamer. The assembly of the HslU/HslV complex is dependent on binding of ATP.</text>
</comment>
<comment type="subcellular location">
    <subcellularLocation>
        <location evidence="1">Cytoplasm</location>
    </subcellularLocation>
</comment>
<comment type="similarity">
    <text evidence="1">Belongs to the peptidase T1B family. HslV subfamily.</text>
</comment>
<accession>B8FRG9</accession>
<keyword id="KW-0021">Allosteric enzyme</keyword>
<keyword id="KW-0963">Cytoplasm</keyword>
<keyword id="KW-0378">Hydrolase</keyword>
<keyword id="KW-0479">Metal-binding</keyword>
<keyword id="KW-0645">Protease</keyword>
<keyword id="KW-0915">Sodium</keyword>
<keyword id="KW-0888">Threonine protease</keyword>
<protein>
    <recommendedName>
        <fullName evidence="1">ATP-dependent protease subunit HslV</fullName>
        <ecNumber evidence="1">3.4.25.2</ecNumber>
    </recommendedName>
</protein>
<reference key="1">
    <citation type="journal article" date="2012" name="BMC Microbiol.">
        <title>Genome sequence of Desulfitobacterium hafniense DCB-2, a Gram-positive anaerobe capable of dehalogenation and metal reduction.</title>
        <authorList>
            <person name="Kim S.H."/>
            <person name="Harzman C."/>
            <person name="Davis J.K."/>
            <person name="Hutcheson R."/>
            <person name="Broderick J.B."/>
            <person name="Marsh T.L."/>
            <person name="Tiedje J.M."/>
        </authorList>
    </citation>
    <scope>NUCLEOTIDE SEQUENCE [LARGE SCALE GENOMIC DNA]</scope>
    <source>
        <strain>DSM 10664 / DCB-2</strain>
    </source>
</reference>
<name>HSLV_DESHD</name>
<organism>
    <name type="scientific">Desulfitobacterium hafniense (strain DSM 10664 / DCB-2)</name>
    <dbReference type="NCBI Taxonomy" id="272564"/>
    <lineage>
        <taxon>Bacteria</taxon>
        <taxon>Bacillati</taxon>
        <taxon>Bacillota</taxon>
        <taxon>Clostridia</taxon>
        <taxon>Eubacteriales</taxon>
        <taxon>Desulfitobacteriaceae</taxon>
        <taxon>Desulfitobacterium</taxon>
    </lineage>
</organism>
<evidence type="ECO:0000255" key="1">
    <source>
        <dbReference type="HAMAP-Rule" id="MF_00248"/>
    </source>
</evidence>
<gene>
    <name evidence="1" type="primary">hslV</name>
    <name type="ordered locus">Dhaf_3713</name>
</gene>
<dbReference type="EC" id="3.4.25.2" evidence="1"/>
<dbReference type="EMBL" id="CP001336">
    <property type="protein sequence ID" value="ACL21729.1"/>
    <property type="molecule type" value="Genomic_DNA"/>
</dbReference>
<dbReference type="RefSeq" id="WP_005810679.1">
    <property type="nucleotide sequence ID" value="NC_011830.1"/>
</dbReference>
<dbReference type="SMR" id="B8FRG9"/>
<dbReference type="MEROPS" id="T01.007"/>
<dbReference type="KEGG" id="dhd:Dhaf_3713"/>
<dbReference type="HOGENOM" id="CLU_093872_1_1_9"/>
<dbReference type="Proteomes" id="UP000007726">
    <property type="component" value="Chromosome"/>
</dbReference>
<dbReference type="GO" id="GO:0009376">
    <property type="term" value="C:HslUV protease complex"/>
    <property type="evidence" value="ECO:0007669"/>
    <property type="project" value="UniProtKB-UniRule"/>
</dbReference>
<dbReference type="GO" id="GO:0005839">
    <property type="term" value="C:proteasome core complex"/>
    <property type="evidence" value="ECO:0007669"/>
    <property type="project" value="InterPro"/>
</dbReference>
<dbReference type="GO" id="GO:0046872">
    <property type="term" value="F:metal ion binding"/>
    <property type="evidence" value="ECO:0007669"/>
    <property type="project" value="UniProtKB-KW"/>
</dbReference>
<dbReference type="GO" id="GO:0004298">
    <property type="term" value="F:threonine-type endopeptidase activity"/>
    <property type="evidence" value="ECO:0007669"/>
    <property type="project" value="UniProtKB-KW"/>
</dbReference>
<dbReference type="GO" id="GO:0051603">
    <property type="term" value="P:proteolysis involved in protein catabolic process"/>
    <property type="evidence" value="ECO:0007669"/>
    <property type="project" value="InterPro"/>
</dbReference>
<dbReference type="CDD" id="cd01913">
    <property type="entry name" value="protease_HslV"/>
    <property type="match status" value="1"/>
</dbReference>
<dbReference type="FunFam" id="3.60.20.10:FF:000002">
    <property type="entry name" value="ATP-dependent protease subunit HslV"/>
    <property type="match status" value="1"/>
</dbReference>
<dbReference type="Gene3D" id="3.60.20.10">
    <property type="entry name" value="Glutamine Phosphoribosylpyrophosphate, subunit 1, domain 1"/>
    <property type="match status" value="1"/>
</dbReference>
<dbReference type="HAMAP" id="MF_00248">
    <property type="entry name" value="HslV"/>
    <property type="match status" value="1"/>
</dbReference>
<dbReference type="InterPro" id="IPR022281">
    <property type="entry name" value="ATP-dep_Prtase_HsIV_su"/>
</dbReference>
<dbReference type="InterPro" id="IPR029055">
    <property type="entry name" value="Ntn_hydrolases_N"/>
</dbReference>
<dbReference type="InterPro" id="IPR001353">
    <property type="entry name" value="Proteasome_sua/b"/>
</dbReference>
<dbReference type="InterPro" id="IPR023333">
    <property type="entry name" value="Proteasome_suB-type"/>
</dbReference>
<dbReference type="NCBIfam" id="TIGR03692">
    <property type="entry name" value="ATP_dep_HslV"/>
    <property type="match status" value="1"/>
</dbReference>
<dbReference type="NCBIfam" id="NF003964">
    <property type="entry name" value="PRK05456.1"/>
    <property type="match status" value="1"/>
</dbReference>
<dbReference type="PANTHER" id="PTHR32194:SF0">
    <property type="entry name" value="ATP-DEPENDENT PROTEASE SUBUNIT HSLV"/>
    <property type="match status" value="1"/>
</dbReference>
<dbReference type="PANTHER" id="PTHR32194">
    <property type="entry name" value="METALLOPROTEASE TLDD"/>
    <property type="match status" value="1"/>
</dbReference>
<dbReference type="Pfam" id="PF00227">
    <property type="entry name" value="Proteasome"/>
    <property type="match status" value="1"/>
</dbReference>
<dbReference type="PIRSF" id="PIRSF039093">
    <property type="entry name" value="HslV"/>
    <property type="match status" value="1"/>
</dbReference>
<dbReference type="SUPFAM" id="SSF56235">
    <property type="entry name" value="N-terminal nucleophile aminohydrolases (Ntn hydrolases)"/>
    <property type="match status" value="1"/>
</dbReference>
<dbReference type="PROSITE" id="PS51476">
    <property type="entry name" value="PROTEASOME_BETA_2"/>
    <property type="match status" value="1"/>
</dbReference>